<dbReference type="EC" id="2.1.3.15" evidence="1"/>
<dbReference type="EMBL" id="CP000246">
    <property type="protein sequence ID" value="ABG84403.1"/>
    <property type="molecule type" value="Genomic_DNA"/>
</dbReference>
<dbReference type="RefSeq" id="WP_003458527.1">
    <property type="nucleotide sequence ID" value="NC_008261.1"/>
</dbReference>
<dbReference type="SMR" id="Q0TRG2"/>
<dbReference type="STRING" id="195103.CPF_1332"/>
<dbReference type="PaxDb" id="195103-CPF_1332"/>
<dbReference type="KEGG" id="cpf:CPF_1332"/>
<dbReference type="eggNOG" id="COG0825">
    <property type="taxonomic scope" value="Bacteria"/>
</dbReference>
<dbReference type="HOGENOM" id="CLU_015486_0_2_9"/>
<dbReference type="UniPathway" id="UPA00655">
    <property type="reaction ID" value="UER00711"/>
</dbReference>
<dbReference type="Proteomes" id="UP000001823">
    <property type="component" value="Chromosome"/>
</dbReference>
<dbReference type="GO" id="GO:0009317">
    <property type="term" value="C:acetyl-CoA carboxylase complex"/>
    <property type="evidence" value="ECO:0007669"/>
    <property type="project" value="InterPro"/>
</dbReference>
<dbReference type="GO" id="GO:0003989">
    <property type="term" value="F:acetyl-CoA carboxylase activity"/>
    <property type="evidence" value="ECO:0007669"/>
    <property type="project" value="InterPro"/>
</dbReference>
<dbReference type="GO" id="GO:0005524">
    <property type="term" value="F:ATP binding"/>
    <property type="evidence" value="ECO:0007669"/>
    <property type="project" value="UniProtKB-KW"/>
</dbReference>
<dbReference type="GO" id="GO:0016743">
    <property type="term" value="F:carboxyl- or carbamoyltransferase activity"/>
    <property type="evidence" value="ECO:0007669"/>
    <property type="project" value="UniProtKB-UniRule"/>
</dbReference>
<dbReference type="GO" id="GO:0006633">
    <property type="term" value="P:fatty acid biosynthetic process"/>
    <property type="evidence" value="ECO:0007669"/>
    <property type="project" value="UniProtKB-KW"/>
</dbReference>
<dbReference type="GO" id="GO:2001295">
    <property type="term" value="P:malonyl-CoA biosynthetic process"/>
    <property type="evidence" value="ECO:0007669"/>
    <property type="project" value="UniProtKB-UniRule"/>
</dbReference>
<dbReference type="Gene3D" id="3.90.226.10">
    <property type="entry name" value="2-enoyl-CoA Hydratase, Chain A, domain 1"/>
    <property type="match status" value="1"/>
</dbReference>
<dbReference type="HAMAP" id="MF_00823">
    <property type="entry name" value="AcetylCoA_CT_alpha"/>
    <property type="match status" value="1"/>
</dbReference>
<dbReference type="InterPro" id="IPR001095">
    <property type="entry name" value="Acetyl_CoA_COase_a_su"/>
</dbReference>
<dbReference type="InterPro" id="IPR029045">
    <property type="entry name" value="ClpP/crotonase-like_dom_sf"/>
</dbReference>
<dbReference type="InterPro" id="IPR011763">
    <property type="entry name" value="COA_CT_C"/>
</dbReference>
<dbReference type="NCBIfam" id="TIGR00513">
    <property type="entry name" value="accA"/>
    <property type="match status" value="1"/>
</dbReference>
<dbReference type="NCBIfam" id="NF041504">
    <property type="entry name" value="AccA_sub"/>
    <property type="match status" value="1"/>
</dbReference>
<dbReference type="NCBIfam" id="NF004344">
    <property type="entry name" value="PRK05724.1"/>
    <property type="match status" value="1"/>
</dbReference>
<dbReference type="PANTHER" id="PTHR42853">
    <property type="entry name" value="ACETYL-COENZYME A CARBOXYLASE CARBOXYL TRANSFERASE SUBUNIT ALPHA"/>
    <property type="match status" value="1"/>
</dbReference>
<dbReference type="PANTHER" id="PTHR42853:SF3">
    <property type="entry name" value="ACETYL-COENZYME A CARBOXYLASE CARBOXYL TRANSFERASE SUBUNIT ALPHA, CHLOROPLASTIC"/>
    <property type="match status" value="1"/>
</dbReference>
<dbReference type="Pfam" id="PF03255">
    <property type="entry name" value="ACCA"/>
    <property type="match status" value="1"/>
</dbReference>
<dbReference type="PRINTS" id="PR01069">
    <property type="entry name" value="ACCCTRFRASEA"/>
</dbReference>
<dbReference type="SUPFAM" id="SSF52096">
    <property type="entry name" value="ClpP/crotonase"/>
    <property type="match status" value="1"/>
</dbReference>
<dbReference type="PROSITE" id="PS50989">
    <property type="entry name" value="COA_CT_CTER"/>
    <property type="match status" value="1"/>
</dbReference>
<sequence length="271" mass="30035">MSRELIRTADAWNKVKIARDPNRPNAKFYINEIFDEFIELHGDRNFGDDKAIIGGIALLNNLSFTVIGICKGENTKENIKRNFGMPHPEGYRKALRLMKQAEKFKRPVICFVDTPGAFCGIGAEERGQGQAIAQNLVELMGLKVPVISIVIGEGGSGGALALAVADKVFMLEHSIYSVLSPEGFASILWKDSSRAEEAASVMKITAQDLKSFNIIDKIIKEPRGGAHKNPIKMAQNIKKTILEALGEMKGTDLDTLLNERYNKYRNIENNL</sequence>
<keyword id="KW-0067">ATP-binding</keyword>
<keyword id="KW-0963">Cytoplasm</keyword>
<keyword id="KW-0275">Fatty acid biosynthesis</keyword>
<keyword id="KW-0276">Fatty acid metabolism</keyword>
<keyword id="KW-0444">Lipid biosynthesis</keyword>
<keyword id="KW-0443">Lipid metabolism</keyword>
<keyword id="KW-0547">Nucleotide-binding</keyword>
<keyword id="KW-0808">Transferase</keyword>
<gene>
    <name evidence="1" type="primary">accA</name>
    <name type="ordered locus">CPF_1332</name>
</gene>
<protein>
    <recommendedName>
        <fullName evidence="1">Acetyl-coenzyme A carboxylase carboxyl transferase subunit alpha</fullName>
        <shortName evidence="1">ACCase subunit alpha</shortName>
        <shortName evidence="1">Acetyl-CoA carboxylase carboxyltransferase subunit alpha</shortName>
        <ecNumber evidence="1">2.1.3.15</ecNumber>
    </recommendedName>
</protein>
<organism>
    <name type="scientific">Clostridium perfringens (strain ATCC 13124 / DSM 756 / JCM 1290 / NCIMB 6125 / NCTC 8237 / Type A)</name>
    <dbReference type="NCBI Taxonomy" id="195103"/>
    <lineage>
        <taxon>Bacteria</taxon>
        <taxon>Bacillati</taxon>
        <taxon>Bacillota</taxon>
        <taxon>Clostridia</taxon>
        <taxon>Eubacteriales</taxon>
        <taxon>Clostridiaceae</taxon>
        <taxon>Clostridium</taxon>
    </lineage>
</organism>
<evidence type="ECO:0000255" key="1">
    <source>
        <dbReference type="HAMAP-Rule" id="MF_00823"/>
    </source>
</evidence>
<evidence type="ECO:0000255" key="2">
    <source>
        <dbReference type="PROSITE-ProRule" id="PRU01137"/>
    </source>
</evidence>
<comment type="function">
    <text evidence="1">Component of the acetyl coenzyme A carboxylase (ACC) complex. First, biotin carboxylase catalyzes the carboxylation of biotin on its carrier protein (BCCP) and then the CO(2) group is transferred by the carboxyltransferase to acetyl-CoA to form malonyl-CoA.</text>
</comment>
<comment type="catalytic activity">
    <reaction evidence="1">
        <text>N(6)-carboxybiotinyl-L-lysyl-[protein] + acetyl-CoA = N(6)-biotinyl-L-lysyl-[protein] + malonyl-CoA</text>
        <dbReference type="Rhea" id="RHEA:54728"/>
        <dbReference type="Rhea" id="RHEA-COMP:10505"/>
        <dbReference type="Rhea" id="RHEA-COMP:10506"/>
        <dbReference type="ChEBI" id="CHEBI:57288"/>
        <dbReference type="ChEBI" id="CHEBI:57384"/>
        <dbReference type="ChEBI" id="CHEBI:83144"/>
        <dbReference type="ChEBI" id="CHEBI:83145"/>
        <dbReference type="EC" id="2.1.3.15"/>
    </reaction>
</comment>
<comment type="pathway">
    <text evidence="1">Lipid metabolism; malonyl-CoA biosynthesis; malonyl-CoA from acetyl-CoA: step 1/1.</text>
</comment>
<comment type="subunit">
    <text evidence="1">Acetyl-CoA carboxylase is a heterohexamer composed of biotin carboxyl carrier protein (AccB), biotin carboxylase (AccC) and two subunits each of ACCase subunit alpha (AccA) and ACCase subunit beta (AccD).</text>
</comment>
<comment type="subcellular location">
    <subcellularLocation>
        <location evidence="1">Cytoplasm</location>
    </subcellularLocation>
</comment>
<comment type="similarity">
    <text evidence="1">Belongs to the AccA family.</text>
</comment>
<feature type="chain" id="PRO_1000062608" description="Acetyl-coenzyme A carboxylase carboxyl transferase subunit alpha">
    <location>
        <begin position="1"/>
        <end position="271"/>
    </location>
</feature>
<feature type="domain" description="CoA carboxyltransferase C-terminal" evidence="2">
    <location>
        <begin position="1"/>
        <end position="247"/>
    </location>
</feature>
<reference key="1">
    <citation type="journal article" date="2006" name="Genome Res.">
        <title>Skewed genomic variability in strains of the toxigenic bacterial pathogen, Clostridium perfringens.</title>
        <authorList>
            <person name="Myers G.S.A."/>
            <person name="Rasko D.A."/>
            <person name="Cheung J.K."/>
            <person name="Ravel J."/>
            <person name="Seshadri R."/>
            <person name="DeBoy R.T."/>
            <person name="Ren Q."/>
            <person name="Varga J."/>
            <person name="Awad M.M."/>
            <person name="Brinkac L.M."/>
            <person name="Daugherty S.C."/>
            <person name="Haft D.H."/>
            <person name="Dodson R.J."/>
            <person name="Madupu R."/>
            <person name="Nelson W.C."/>
            <person name="Rosovitz M.J."/>
            <person name="Sullivan S.A."/>
            <person name="Khouri H."/>
            <person name="Dimitrov G.I."/>
            <person name="Watkins K.L."/>
            <person name="Mulligan S."/>
            <person name="Benton J."/>
            <person name="Radune D."/>
            <person name="Fisher D.J."/>
            <person name="Atkins H.S."/>
            <person name="Hiscox T."/>
            <person name="Jost B.H."/>
            <person name="Billington S.J."/>
            <person name="Songer J.G."/>
            <person name="McClane B.A."/>
            <person name="Titball R.W."/>
            <person name="Rood J.I."/>
            <person name="Melville S.B."/>
            <person name="Paulsen I.T."/>
        </authorList>
    </citation>
    <scope>NUCLEOTIDE SEQUENCE [LARGE SCALE GENOMIC DNA]</scope>
    <source>
        <strain>ATCC 13124 / DSM 756 / JCM 1290 / NCIMB 6125 / NCTC 8237 / S 107 / Type A</strain>
    </source>
</reference>
<name>ACCA_CLOP1</name>
<proteinExistence type="inferred from homology"/>
<accession>Q0TRG2</accession>